<proteinExistence type="evidence at protein level"/>
<reference key="1">
    <citation type="journal article" date="2005" name="J. Virol.">
        <title>Genome of deerpox virus.</title>
        <authorList>
            <person name="Afonso C.L."/>
            <person name="Delhon G."/>
            <person name="Tulman E.R."/>
            <person name="Lu Z."/>
            <person name="Zsak A."/>
            <person name="Becerra V.M."/>
            <person name="Zsak L."/>
            <person name="Kutish G.F."/>
            <person name="Rock D.L."/>
        </authorList>
    </citation>
    <scope>NUCLEOTIDE SEQUENCE [LARGE SCALE GENOMIC DNA]</scope>
</reference>
<reference key="2">
    <citation type="journal article" date="2011" name="J. Virol.">
        <title>Deerpox virus encodes an inhibitor of apoptosis that regulates Bak and Bax.</title>
        <authorList>
            <person name="Banadyga L."/>
            <person name="Lam S.C."/>
            <person name="Okamoto T."/>
            <person name="Kvansakul M."/>
            <person name="Huang D.C."/>
            <person name="Barry M."/>
        </authorList>
    </citation>
    <scope>FUNCTION</scope>
    <scope>SUBCELLULAR LOCATION</scope>
    <scope>INTERACTION WITH HOST BAX AND BAK1</scope>
</reference>
<reference key="3">
    <citation type="journal article" date="2015" name="Acta Crystallogr. D">
        <title>Structural basis of Deerpox virus-mediated inhibition of apoptosis.</title>
        <authorList>
            <person name="Burton D.R."/>
            <person name="Caria S."/>
            <person name="Marshall B."/>
            <person name="Barry M."/>
            <person name="Kvansakul M."/>
        </authorList>
    </citation>
    <scope>X-RAY CRYSTALLOGRAPHY (2.30 ANGSTROMS) OF 1-155</scope>
</reference>
<protein>
    <recommendedName>
        <fullName>Apoptosis regulator DPV022</fullName>
    </recommendedName>
</protein>
<evidence type="ECO:0000255" key="1"/>
<evidence type="ECO:0000269" key="2">
    <source>
    </source>
</evidence>
<evidence type="ECO:0000312" key="3">
    <source>
        <dbReference type="Proteomes" id="UP000000866"/>
    </source>
</evidence>
<evidence type="ECO:0007829" key="4">
    <source>
        <dbReference type="PDB" id="4UF1"/>
    </source>
</evidence>
<evidence type="ECO:0007829" key="5">
    <source>
        <dbReference type="PDB" id="4UF3"/>
    </source>
</evidence>
<name>DPV22_DPV83</name>
<gene>
    <name type="primary">DPV022</name>
</gene>
<dbReference type="EMBL" id="AY689436">
    <property type="protein sequence ID" value="ABI99179.1"/>
    <property type="molecule type" value="Genomic_DNA"/>
</dbReference>
<dbReference type="RefSeq" id="YP_227399.1">
    <property type="nucleotide sequence ID" value="NC_006966.1"/>
</dbReference>
<dbReference type="PDB" id="4UF1">
    <property type="method" value="X-ray"/>
    <property type="resolution" value="2.30 A"/>
    <property type="chains" value="A=1-155"/>
</dbReference>
<dbReference type="PDB" id="4UF2">
    <property type="method" value="X-ray"/>
    <property type="resolution" value="3.00 A"/>
    <property type="chains" value="A=1-155"/>
</dbReference>
<dbReference type="PDB" id="4UF3">
    <property type="method" value="X-ray"/>
    <property type="resolution" value="2.70 A"/>
    <property type="chains" value="A=1-155"/>
</dbReference>
<dbReference type="PDBsum" id="4UF1"/>
<dbReference type="PDBsum" id="4UF2"/>
<dbReference type="PDBsum" id="4UF3"/>
<dbReference type="SMR" id="Q08FX8"/>
<dbReference type="KEGG" id="vg:3346328"/>
<dbReference type="EvolutionaryTrace" id="Q08FX8"/>
<dbReference type="Proteomes" id="UP000000866">
    <property type="component" value="Genome"/>
</dbReference>
<dbReference type="GO" id="GO:0033644">
    <property type="term" value="C:host cell membrane"/>
    <property type="evidence" value="ECO:0007669"/>
    <property type="project" value="UniProtKB-SubCell"/>
</dbReference>
<dbReference type="GO" id="GO:0033650">
    <property type="term" value="C:host cell mitochondrion"/>
    <property type="evidence" value="ECO:0007669"/>
    <property type="project" value="UniProtKB-SubCell"/>
</dbReference>
<dbReference type="GO" id="GO:0016020">
    <property type="term" value="C:membrane"/>
    <property type="evidence" value="ECO:0007669"/>
    <property type="project" value="UniProtKB-KW"/>
</dbReference>
<dbReference type="GO" id="GO:0042981">
    <property type="term" value="P:regulation of apoptotic process"/>
    <property type="evidence" value="ECO:0007669"/>
    <property type="project" value="InterPro"/>
</dbReference>
<dbReference type="GO" id="GO:0033668">
    <property type="term" value="P:symbiont-mediated suppression of host apoptosis"/>
    <property type="evidence" value="ECO:0007669"/>
    <property type="project" value="UniProtKB-KW"/>
</dbReference>
<dbReference type="Gene3D" id="1.10.437.10">
    <property type="entry name" value="Blc2-like"/>
    <property type="match status" value="1"/>
</dbReference>
<dbReference type="InterPro" id="IPR036834">
    <property type="entry name" value="Bcl-2-like_sf"/>
</dbReference>
<dbReference type="InterPro" id="IPR021119">
    <property type="entry name" value="Poxvirus_F1/C10"/>
</dbReference>
<dbReference type="Pfam" id="PF11099">
    <property type="entry name" value="M11L"/>
    <property type="match status" value="1"/>
</dbReference>
<sequence length="179" mass="20874">MEAAIEFDEIVKKLLNIYINDICTMGEKRLLNNYEKSILDRIYKSCEYIKKNYELDFNSMYNQININDITTSDIKSKIIESLLIDSRPSVKLATLSFISLIAEKWGEKNRTKIMEILSNEIVEKISNNGKDFIDFIDRDDDDIVDDYVLITNYLKITIFGAILGITAYYICKYLLKSIF</sequence>
<organism evidence="3">
    <name type="scientific">Deerpox virus (strain Mule deer/United States/W-848-83/1983)</name>
    <name type="common">DPV</name>
    <dbReference type="NCBI Taxonomy" id="305674"/>
    <lineage>
        <taxon>Viruses</taxon>
        <taxon>Varidnaviria</taxon>
        <taxon>Bamfordvirae</taxon>
        <taxon>Nucleocytoviricota</taxon>
        <taxon>Pokkesviricetes</taxon>
        <taxon>Chitovirales</taxon>
        <taxon>Poxviridae</taxon>
        <taxon>Chordopoxvirinae</taxon>
        <taxon>Cervidpoxvirus</taxon>
        <taxon>Mule deerpox virus</taxon>
    </lineage>
</organism>
<keyword id="KW-0002">3D-structure</keyword>
<keyword id="KW-1043">Host membrane</keyword>
<keyword id="KW-1045">Host mitochondrion</keyword>
<keyword id="KW-0945">Host-virus interaction</keyword>
<keyword id="KW-1081">Inhibition of host apoptosis by viral BCL2-like protein</keyword>
<keyword id="KW-0472">Membrane</keyword>
<keyword id="KW-1119">Modulation of host cell apoptosis by virus</keyword>
<keyword id="KW-1185">Reference proteome</keyword>
<keyword id="KW-0812">Transmembrane</keyword>
<keyword id="KW-1133">Transmembrane helix</keyword>
<organismHost>
    <name type="scientific">Odocoileus hemionus</name>
    <name type="common">Mule deer</name>
    <name type="synonym">Cervus hemionus</name>
    <dbReference type="NCBI Taxonomy" id="9872"/>
</organismHost>
<comment type="function">
    <text evidence="2">Plays a role in the inhibition of host apoptosis by sequestering and inactivating several proapoptotic BCL-2 proteins, including BAK1 and BAX. Prevents the conformational activation of both of them.</text>
</comment>
<comment type="subunit">
    <text>Interacts with host BAX and BAK1.</text>
</comment>
<comment type="subcellular location">
    <subcellularLocation>
        <location evidence="2">Host mitochondrion</location>
    </subcellularLocation>
    <subcellularLocation>
        <location evidence="1">Host membrane</location>
        <topology evidence="1">Single-pass membrane protein</topology>
    </subcellularLocation>
</comment>
<feature type="chain" id="PRO_0000443231" description="Apoptosis regulator DPV022">
    <location>
        <begin position="1"/>
        <end position="179"/>
    </location>
</feature>
<feature type="transmembrane region" description="Helical" evidence="1">
    <location>
        <begin position="148"/>
        <end position="170"/>
    </location>
</feature>
<feature type="helix" evidence="4">
    <location>
        <begin position="8"/>
        <end position="29"/>
    </location>
</feature>
<feature type="helix" evidence="4">
    <location>
        <begin position="33"/>
        <end position="52"/>
    </location>
</feature>
<feature type="helix" evidence="4">
    <location>
        <begin position="54"/>
        <end position="64"/>
    </location>
</feature>
<feature type="strand" evidence="4">
    <location>
        <begin position="65"/>
        <end position="68"/>
    </location>
</feature>
<feature type="helix" evidence="4">
    <location>
        <begin position="71"/>
        <end position="84"/>
    </location>
</feature>
<feature type="helix" evidence="4">
    <location>
        <begin position="88"/>
        <end position="104"/>
    </location>
</feature>
<feature type="strand" evidence="5">
    <location>
        <begin position="106"/>
        <end position="108"/>
    </location>
</feature>
<feature type="helix" evidence="4">
    <location>
        <begin position="111"/>
        <end position="117"/>
    </location>
</feature>
<feature type="helix" evidence="4">
    <location>
        <begin position="120"/>
        <end position="126"/>
    </location>
</feature>
<feature type="helix" evidence="4">
    <location>
        <begin position="129"/>
        <end position="136"/>
    </location>
</feature>
<accession>Q08FX8</accession>